<gene>
    <name evidence="1" type="primary">menC</name>
    <name type="ordered locus">VCM66_1896</name>
</gene>
<sequence>MRHATLYRYQLPMDSGVILRNEKLTQREGFIVELTENGRTARGEIAPLPGFSRETLEDAGLQAQALLEQWVKGHAIEWDAQHPSVAFGLSMAHYELEQALPEQGNYYVAPLCTGDPDELLPVLNNLPGQKVAKVKVGLYEPIRDGMLVNLFLESMPDLTLRLDANRAWTPAKALKFAQYVAPSLRSRIAFLEEPCQSPSESIAFSIDTGIAIAWDETLQEAVRDADFALENLLGVKTIVIKPTLIGSVYRVEALIEKAKTLGLQAVISSSLESSLGLNQLARLAHKLLPNEVPGLDTIGLFRAQLETPWPNSSLPVVALQEQSIVWRSESSL</sequence>
<evidence type="ECO:0000255" key="1">
    <source>
        <dbReference type="HAMAP-Rule" id="MF_00470"/>
    </source>
</evidence>
<feature type="chain" id="PRO_1000135489" description="o-succinylbenzoate synthase">
    <location>
        <begin position="1"/>
        <end position="332"/>
    </location>
</feature>
<feature type="active site" description="Proton donor" evidence="1">
    <location>
        <position position="135"/>
    </location>
</feature>
<feature type="active site" description="Proton acceptor" evidence="1">
    <location>
        <position position="241"/>
    </location>
</feature>
<feature type="binding site" evidence="1">
    <location>
        <position position="163"/>
    </location>
    <ligand>
        <name>Mg(2+)</name>
        <dbReference type="ChEBI" id="CHEBI:18420"/>
    </ligand>
</feature>
<feature type="binding site" evidence="1">
    <location>
        <position position="192"/>
    </location>
    <ligand>
        <name>Mg(2+)</name>
        <dbReference type="ChEBI" id="CHEBI:18420"/>
    </ligand>
</feature>
<feature type="binding site" evidence="1">
    <location>
        <position position="215"/>
    </location>
    <ligand>
        <name>Mg(2+)</name>
        <dbReference type="ChEBI" id="CHEBI:18420"/>
    </ligand>
</feature>
<dbReference type="EC" id="4.2.1.113" evidence="1"/>
<dbReference type="EMBL" id="CP001233">
    <property type="protein sequence ID" value="ACP06199.1"/>
    <property type="molecule type" value="Genomic_DNA"/>
</dbReference>
<dbReference type="RefSeq" id="WP_001215211.1">
    <property type="nucleotide sequence ID" value="NC_012578.1"/>
</dbReference>
<dbReference type="SMR" id="C3LNS3"/>
<dbReference type="KEGG" id="vcm:VCM66_1896"/>
<dbReference type="HOGENOM" id="CLU_030273_0_1_6"/>
<dbReference type="UniPathway" id="UPA00079"/>
<dbReference type="UniPathway" id="UPA01057">
    <property type="reaction ID" value="UER00165"/>
</dbReference>
<dbReference type="Proteomes" id="UP000001217">
    <property type="component" value="Chromosome I"/>
</dbReference>
<dbReference type="GO" id="GO:0000287">
    <property type="term" value="F:magnesium ion binding"/>
    <property type="evidence" value="ECO:0007669"/>
    <property type="project" value="UniProtKB-UniRule"/>
</dbReference>
<dbReference type="GO" id="GO:0043748">
    <property type="term" value="F:O-succinylbenzoate synthase activity"/>
    <property type="evidence" value="ECO:0007669"/>
    <property type="project" value="UniProtKB-EC"/>
</dbReference>
<dbReference type="GO" id="GO:0009234">
    <property type="term" value="P:menaquinone biosynthetic process"/>
    <property type="evidence" value="ECO:0007669"/>
    <property type="project" value="UniProtKB-UniRule"/>
</dbReference>
<dbReference type="CDD" id="cd03320">
    <property type="entry name" value="OSBS"/>
    <property type="match status" value="1"/>
</dbReference>
<dbReference type="Gene3D" id="3.20.20.120">
    <property type="entry name" value="Enolase-like C-terminal domain"/>
    <property type="match status" value="1"/>
</dbReference>
<dbReference type="Gene3D" id="3.30.390.10">
    <property type="entry name" value="Enolase-like, N-terminal domain"/>
    <property type="match status" value="1"/>
</dbReference>
<dbReference type="HAMAP" id="MF_00470">
    <property type="entry name" value="MenC_1"/>
    <property type="match status" value="1"/>
</dbReference>
<dbReference type="InterPro" id="IPR036849">
    <property type="entry name" value="Enolase-like_C_sf"/>
</dbReference>
<dbReference type="InterPro" id="IPR029017">
    <property type="entry name" value="Enolase-like_N"/>
</dbReference>
<dbReference type="InterPro" id="IPR029065">
    <property type="entry name" value="Enolase_C-like"/>
</dbReference>
<dbReference type="InterPro" id="IPR013342">
    <property type="entry name" value="Mandelate_racemase_C"/>
</dbReference>
<dbReference type="InterPro" id="IPR010196">
    <property type="entry name" value="OSB_synthase_MenC1"/>
</dbReference>
<dbReference type="InterPro" id="IPR041338">
    <property type="entry name" value="OSBS_N"/>
</dbReference>
<dbReference type="NCBIfam" id="TIGR01927">
    <property type="entry name" value="menC_gam_Gplu"/>
    <property type="match status" value="1"/>
</dbReference>
<dbReference type="NCBIfam" id="NF003473">
    <property type="entry name" value="PRK05105.1"/>
    <property type="match status" value="1"/>
</dbReference>
<dbReference type="PANTHER" id="PTHR48073:SF2">
    <property type="entry name" value="O-SUCCINYLBENZOATE SYNTHASE"/>
    <property type="match status" value="1"/>
</dbReference>
<dbReference type="PANTHER" id="PTHR48073">
    <property type="entry name" value="O-SUCCINYLBENZOATE SYNTHASE-RELATED"/>
    <property type="match status" value="1"/>
</dbReference>
<dbReference type="Pfam" id="PF21508">
    <property type="entry name" value="MenC_N"/>
    <property type="match status" value="1"/>
</dbReference>
<dbReference type="Pfam" id="PF13378">
    <property type="entry name" value="MR_MLE_C"/>
    <property type="match status" value="1"/>
</dbReference>
<dbReference type="SFLD" id="SFLDS00001">
    <property type="entry name" value="Enolase"/>
    <property type="match status" value="1"/>
</dbReference>
<dbReference type="SFLD" id="SFLDF00009">
    <property type="entry name" value="o-succinylbenzoate_synthase"/>
    <property type="match status" value="1"/>
</dbReference>
<dbReference type="SMART" id="SM00922">
    <property type="entry name" value="MR_MLE"/>
    <property type="match status" value="1"/>
</dbReference>
<dbReference type="SUPFAM" id="SSF51604">
    <property type="entry name" value="Enolase C-terminal domain-like"/>
    <property type="match status" value="1"/>
</dbReference>
<dbReference type="SUPFAM" id="SSF54826">
    <property type="entry name" value="Enolase N-terminal domain-like"/>
    <property type="match status" value="1"/>
</dbReference>
<comment type="function">
    <text evidence="1">Converts 2-succinyl-6-hydroxy-2,4-cyclohexadiene-1-carboxylate (SHCHC) to 2-succinylbenzoate (OSB).</text>
</comment>
<comment type="catalytic activity">
    <reaction evidence="1">
        <text>(1R,6R)-6-hydroxy-2-succinyl-cyclohexa-2,4-diene-1-carboxylate = 2-succinylbenzoate + H2O</text>
        <dbReference type="Rhea" id="RHEA:10196"/>
        <dbReference type="ChEBI" id="CHEBI:15377"/>
        <dbReference type="ChEBI" id="CHEBI:18325"/>
        <dbReference type="ChEBI" id="CHEBI:58689"/>
        <dbReference type="EC" id="4.2.1.113"/>
    </reaction>
</comment>
<comment type="cofactor">
    <cofactor evidence="1">
        <name>a divalent metal cation</name>
        <dbReference type="ChEBI" id="CHEBI:60240"/>
    </cofactor>
</comment>
<comment type="pathway">
    <text evidence="1">Quinol/quinone metabolism; 1,4-dihydroxy-2-naphthoate biosynthesis; 1,4-dihydroxy-2-naphthoate from chorismate: step 4/7.</text>
</comment>
<comment type="pathway">
    <text evidence="1">Quinol/quinone metabolism; menaquinone biosynthesis.</text>
</comment>
<comment type="similarity">
    <text evidence="1">Belongs to the mandelate racemase/muconate lactonizing enzyme family. MenC type 1 subfamily.</text>
</comment>
<name>MENC_VIBCM</name>
<organism>
    <name type="scientific">Vibrio cholerae serotype O1 (strain M66-2)</name>
    <dbReference type="NCBI Taxonomy" id="579112"/>
    <lineage>
        <taxon>Bacteria</taxon>
        <taxon>Pseudomonadati</taxon>
        <taxon>Pseudomonadota</taxon>
        <taxon>Gammaproteobacteria</taxon>
        <taxon>Vibrionales</taxon>
        <taxon>Vibrionaceae</taxon>
        <taxon>Vibrio</taxon>
    </lineage>
</organism>
<accession>C3LNS3</accession>
<protein>
    <recommendedName>
        <fullName evidence="1">o-succinylbenzoate synthase</fullName>
        <shortName evidence="1">OSB synthase</shortName>
        <shortName evidence="1">OSBS</shortName>
        <ecNumber evidence="1">4.2.1.113</ecNumber>
    </recommendedName>
    <alternativeName>
        <fullName evidence="1">4-(2'-carboxyphenyl)-4-oxybutyric acid synthase</fullName>
    </alternativeName>
    <alternativeName>
        <fullName evidence="1">o-succinylbenzoic acid synthase</fullName>
    </alternativeName>
</protein>
<proteinExistence type="inferred from homology"/>
<reference key="1">
    <citation type="journal article" date="2008" name="PLoS ONE">
        <title>A recalibrated molecular clock and independent origins for the cholera pandemic clones.</title>
        <authorList>
            <person name="Feng L."/>
            <person name="Reeves P.R."/>
            <person name="Lan R."/>
            <person name="Ren Y."/>
            <person name="Gao C."/>
            <person name="Zhou Z."/>
            <person name="Ren Y."/>
            <person name="Cheng J."/>
            <person name="Wang W."/>
            <person name="Wang J."/>
            <person name="Qian W."/>
            <person name="Li D."/>
            <person name="Wang L."/>
        </authorList>
    </citation>
    <scope>NUCLEOTIDE SEQUENCE [LARGE SCALE GENOMIC DNA]</scope>
    <source>
        <strain>M66-2</strain>
    </source>
</reference>
<keyword id="KW-0456">Lyase</keyword>
<keyword id="KW-0460">Magnesium</keyword>
<keyword id="KW-0474">Menaquinone biosynthesis</keyword>
<keyword id="KW-0479">Metal-binding</keyword>